<proteinExistence type="inferred from homology"/>
<gene>
    <name type="ordered locus">PLES_04021</name>
</gene>
<keyword id="KW-0963">Cytoplasm</keyword>
<keyword id="KW-0378">Hydrolase</keyword>
<keyword id="KW-0540">Nuclease</keyword>
<keyword id="KW-0690">Ribosome biogenesis</keyword>
<feature type="chain" id="PRO_1000131059" description="Putative pre-16S rRNA nuclease">
    <location>
        <begin position="1"/>
        <end position="144"/>
    </location>
</feature>
<sequence length="144" mass="15955">MASDKPLRLLLGFDYGTRQIGVAVGQAVTGQARELCVLKAQNGVPDWNRVEALIKEWQPDAIVVGLPLNMDGSPSEMSERAEKFGRRLNGRFNLPVFTHDERLTTYAAKGERLAQGQRDGYRERPVDALAAALLLEGWLAEHPD</sequence>
<protein>
    <recommendedName>
        <fullName evidence="1">Putative pre-16S rRNA nuclease</fullName>
        <ecNumber evidence="1">3.1.-.-</ecNumber>
    </recommendedName>
</protein>
<dbReference type="EC" id="3.1.-.-" evidence="1"/>
<dbReference type="EMBL" id="FM209186">
    <property type="protein sequence ID" value="CAW25129.1"/>
    <property type="molecule type" value="Genomic_DNA"/>
</dbReference>
<dbReference type="SMR" id="B7V3Z1"/>
<dbReference type="KEGG" id="pag:PLES_04021"/>
<dbReference type="HOGENOM" id="CLU_098240_3_0_6"/>
<dbReference type="GO" id="GO:0005829">
    <property type="term" value="C:cytosol"/>
    <property type="evidence" value="ECO:0007669"/>
    <property type="project" value="TreeGrafter"/>
</dbReference>
<dbReference type="GO" id="GO:0004518">
    <property type="term" value="F:nuclease activity"/>
    <property type="evidence" value="ECO:0007669"/>
    <property type="project" value="UniProtKB-KW"/>
</dbReference>
<dbReference type="GO" id="GO:0000967">
    <property type="term" value="P:rRNA 5'-end processing"/>
    <property type="evidence" value="ECO:0007669"/>
    <property type="project" value="UniProtKB-UniRule"/>
</dbReference>
<dbReference type="CDD" id="cd16964">
    <property type="entry name" value="YqgF"/>
    <property type="match status" value="1"/>
</dbReference>
<dbReference type="FunFam" id="3.30.420.140:FF:000002">
    <property type="entry name" value="Putative pre-16S rRNA nuclease"/>
    <property type="match status" value="1"/>
</dbReference>
<dbReference type="Gene3D" id="3.30.420.140">
    <property type="entry name" value="YqgF/RNase H-like domain"/>
    <property type="match status" value="1"/>
</dbReference>
<dbReference type="HAMAP" id="MF_00651">
    <property type="entry name" value="Nuclease_YqgF"/>
    <property type="match status" value="1"/>
</dbReference>
<dbReference type="InterPro" id="IPR012337">
    <property type="entry name" value="RNaseH-like_sf"/>
</dbReference>
<dbReference type="InterPro" id="IPR005227">
    <property type="entry name" value="YqgF"/>
</dbReference>
<dbReference type="InterPro" id="IPR006641">
    <property type="entry name" value="YqgF/RNaseH-like_dom"/>
</dbReference>
<dbReference type="InterPro" id="IPR037027">
    <property type="entry name" value="YqgF/RNaseH-like_dom_sf"/>
</dbReference>
<dbReference type="NCBIfam" id="TIGR00250">
    <property type="entry name" value="RNAse_H_YqgF"/>
    <property type="match status" value="1"/>
</dbReference>
<dbReference type="PANTHER" id="PTHR33317">
    <property type="entry name" value="POLYNUCLEOTIDYL TRANSFERASE, RIBONUCLEASE H-LIKE SUPERFAMILY PROTEIN"/>
    <property type="match status" value="1"/>
</dbReference>
<dbReference type="PANTHER" id="PTHR33317:SF4">
    <property type="entry name" value="POLYNUCLEOTIDYL TRANSFERASE, RIBONUCLEASE H-LIKE SUPERFAMILY PROTEIN"/>
    <property type="match status" value="1"/>
</dbReference>
<dbReference type="Pfam" id="PF03652">
    <property type="entry name" value="RuvX"/>
    <property type="match status" value="1"/>
</dbReference>
<dbReference type="SMART" id="SM00732">
    <property type="entry name" value="YqgFc"/>
    <property type="match status" value="1"/>
</dbReference>
<dbReference type="SUPFAM" id="SSF53098">
    <property type="entry name" value="Ribonuclease H-like"/>
    <property type="match status" value="1"/>
</dbReference>
<reference key="1">
    <citation type="journal article" date="2009" name="Genome Res.">
        <title>Newly introduced genomic prophage islands are critical determinants of in vivo competitiveness in the Liverpool epidemic strain of Pseudomonas aeruginosa.</title>
        <authorList>
            <person name="Winstanley C."/>
            <person name="Langille M.G.I."/>
            <person name="Fothergill J.L."/>
            <person name="Kukavica-Ibrulj I."/>
            <person name="Paradis-Bleau C."/>
            <person name="Sanschagrin F."/>
            <person name="Thomson N.R."/>
            <person name="Winsor G.L."/>
            <person name="Quail M.A."/>
            <person name="Lennard N."/>
            <person name="Bignell A."/>
            <person name="Clarke L."/>
            <person name="Seeger K."/>
            <person name="Saunders D."/>
            <person name="Harris D."/>
            <person name="Parkhill J."/>
            <person name="Hancock R.E.W."/>
            <person name="Brinkman F.S.L."/>
            <person name="Levesque R.C."/>
        </authorList>
    </citation>
    <scope>NUCLEOTIDE SEQUENCE [LARGE SCALE GENOMIC DNA]</scope>
    <source>
        <strain>LESB58</strain>
    </source>
</reference>
<comment type="function">
    <text evidence="1">Could be a nuclease involved in processing of the 5'-end of pre-16S rRNA.</text>
</comment>
<comment type="subcellular location">
    <subcellularLocation>
        <location evidence="1">Cytoplasm</location>
    </subcellularLocation>
</comment>
<comment type="similarity">
    <text evidence="1">Belongs to the YqgF nuclease family.</text>
</comment>
<name>YQGF_PSEA8</name>
<organism>
    <name type="scientific">Pseudomonas aeruginosa (strain LESB58)</name>
    <dbReference type="NCBI Taxonomy" id="557722"/>
    <lineage>
        <taxon>Bacteria</taxon>
        <taxon>Pseudomonadati</taxon>
        <taxon>Pseudomonadota</taxon>
        <taxon>Gammaproteobacteria</taxon>
        <taxon>Pseudomonadales</taxon>
        <taxon>Pseudomonadaceae</taxon>
        <taxon>Pseudomonas</taxon>
    </lineage>
</organism>
<accession>B7V3Z1</accession>
<evidence type="ECO:0000255" key="1">
    <source>
        <dbReference type="HAMAP-Rule" id="MF_00651"/>
    </source>
</evidence>